<keyword id="KW-0878">Amphibian defense peptide</keyword>
<keyword id="KW-0044">Antibiotic</keyword>
<keyword id="KW-0929">Antimicrobial</keyword>
<keyword id="KW-0903">Direct protein sequencing</keyword>
<keyword id="KW-1015">Disulfide bond</keyword>
<keyword id="KW-0964">Secreted</keyword>
<proteinExistence type="evidence at protein level"/>
<reference evidence="5" key="1">
    <citation type="journal article" date="2008" name="Rapid Commun. Mass Spectrom.">
        <title>De novo sequencing of peptides secreted by the skin glands of the caucasian green frog Rana ridibunda.</title>
        <authorList>
            <person name="Samgina T.Y."/>
            <person name="Artemenko K.A."/>
            <person name="Gorshkov V.A."/>
            <person name="Ogourtsov S.V."/>
            <person name="Zubarev R.A."/>
            <person name="Lebedev A.T."/>
        </authorList>
    </citation>
    <scope>PROTEIN SEQUENCE</scope>
    <scope>MASS SPECTROMETRY</scope>
    <scope>DISULFIDE BOND</scope>
    <scope>SUBCELLULAR LOCATION</scope>
    <source>
        <tissue evidence="3">Skin secretion</tissue>
    </source>
</reference>
<feature type="peptide" id="PRO_0000361075" description="Esculentin-2Ra" evidence="3">
    <location>
        <begin position="1"/>
        <end position="37"/>
    </location>
</feature>
<feature type="disulfide bond" evidence="3">
    <location>
        <begin position="31"/>
        <end position="37"/>
    </location>
</feature>
<name>ES2RA_PELRI</name>
<evidence type="ECO:0000250" key="1">
    <source>
        <dbReference type="UniProtKB" id="P40845"/>
    </source>
</evidence>
<evidence type="ECO:0000255" key="2"/>
<evidence type="ECO:0000269" key="3">
    <source>
    </source>
</evidence>
<evidence type="ECO:0000303" key="4">
    <source>
    </source>
</evidence>
<evidence type="ECO:0000305" key="5"/>
<evidence type="ECO:0000305" key="6">
    <source>
    </source>
</evidence>
<dbReference type="SMR" id="P86017"/>
<dbReference type="GO" id="GO:0005576">
    <property type="term" value="C:extracellular region"/>
    <property type="evidence" value="ECO:0000314"/>
    <property type="project" value="UniProtKB"/>
</dbReference>
<dbReference type="GO" id="GO:0042742">
    <property type="term" value="P:defense response to bacterium"/>
    <property type="evidence" value="ECO:0007669"/>
    <property type="project" value="UniProtKB-KW"/>
</dbReference>
<dbReference type="InterPro" id="IPR012521">
    <property type="entry name" value="Antimicrobial_frog_2"/>
</dbReference>
<dbReference type="Pfam" id="PF08023">
    <property type="entry name" value="Antimicrobial_2"/>
    <property type="match status" value="1"/>
</dbReference>
<protein>
    <recommendedName>
        <fullName evidence="4">Esculentin-2Ra</fullName>
    </recommendedName>
</protein>
<sequence length="37" mass="3716">GILSLVKGAAKLLGKGLAKEGGKVGLEFIACKVTNQC</sequence>
<organism>
    <name type="scientific">Pelophylax ridibundus</name>
    <name type="common">Marsh frog</name>
    <name type="synonym">Rana ridibunda</name>
    <dbReference type="NCBI Taxonomy" id="8406"/>
    <lineage>
        <taxon>Eukaryota</taxon>
        <taxon>Metazoa</taxon>
        <taxon>Chordata</taxon>
        <taxon>Craniata</taxon>
        <taxon>Vertebrata</taxon>
        <taxon>Euteleostomi</taxon>
        <taxon>Amphibia</taxon>
        <taxon>Batrachia</taxon>
        <taxon>Anura</taxon>
        <taxon>Neobatrachia</taxon>
        <taxon>Ranoidea</taxon>
        <taxon>Ranidae</taxon>
        <taxon>Pelophylax</taxon>
    </lineage>
</organism>
<accession>P86017</accession>
<comment type="function">
    <text evidence="1">Antimicrobial peptide.</text>
</comment>
<comment type="subcellular location">
    <subcellularLocation>
        <location evidence="3">Secreted</location>
    </subcellularLocation>
</comment>
<comment type="tissue specificity">
    <text evidence="6">Expressed by the skin glands.</text>
</comment>
<comment type="mass spectrometry" mass="3711.0" method="Electrospray" evidence="3"/>
<comment type="similarity">
    <text evidence="2">Belongs to the frog skin active peptide (FSAP) family. Esculentin subfamily.</text>
</comment>